<accession>A6MME8</accession>
<feature type="chain" id="PRO_0000359807" description="Photosystem II CP47 reaction center protein">
    <location>
        <begin position="1"/>
        <end position="508"/>
    </location>
</feature>
<feature type="transmembrane region" description="Helical" evidence="1">
    <location>
        <begin position="21"/>
        <end position="36"/>
    </location>
</feature>
<feature type="transmembrane region" description="Helical" evidence="1">
    <location>
        <begin position="101"/>
        <end position="115"/>
    </location>
</feature>
<feature type="transmembrane region" description="Helical" evidence="1">
    <location>
        <begin position="140"/>
        <end position="156"/>
    </location>
</feature>
<feature type="transmembrane region" description="Helical" evidence="1">
    <location>
        <begin position="203"/>
        <end position="218"/>
    </location>
</feature>
<feature type="transmembrane region" description="Helical" evidence="1">
    <location>
        <begin position="237"/>
        <end position="252"/>
    </location>
</feature>
<feature type="transmembrane region" description="Helical" evidence="1">
    <location>
        <begin position="457"/>
        <end position="472"/>
    </location>
</feature>
<gene>
    <name evidence="1" type="primary">psbB</name>
</gene>
<protein>
    <recommendedName>
        <fullName evidence="1">Photosystem II CP47 reaction center protein</fullName>
    </recommendedName>
    <alternativeName>
        <fullName evidence="1">PSII 47 kDa protein</fullName>
    </alternativeName>
    <alternativeName>
        <fullName evidence="1">Protein CP-47</fullName>
    </alternativeName>
</protein>
<name>PSBB_CHLSC</name>
<comment type="function">
    <text evidence="1">One of the components of the core complex of photosystem II (PSII). It binds chlorophyll and helps catalyze the primary light-induced photochemical processes of PSII. PSII is a light-driven water:plastoquinone oxidoreductase, using light energy to abstract electrons from H(2)O, generating O(2) and a proton gradient subsequently used for ATP formation.</text>
</comment>
<comment type="cofactor">
    <text evidence="1">Binds multiple chlorophylls. PSII binds additional chlorophylls, carotenoids and specific lipids.</text>
</comment>
<comment type="subunit">
    <text evidence="1">PSII is composed of 1 copy each of membrane proteins PsbA, PsbB, PsbC, PsbD, PsbE, PsbF, PsbH, PsbI, PsbJ, PsbK, PsbL, PsbM, PsbT, PsbX, PsbY, PsbZ, Psb30/Ycf12, at least 3 peripheral proteins of the oxygen-evolving complex and a large number of cofactors. It forms dimeric complexes.</text>
</comment>
<comment type="subcellular location">
    <subcellularLocation>
        <location evidence="1">Plastid</location>
        <location evidence="1">Chloroplast thylakoid membrane</location>
        <topology evidence="1">Multi-pass membrane protein</topology>
    </subcellularLocation>
</comment>
<comment type="similarity">
    <text evidence="1">Belongs to the PsbB/PsbC family. PsbB subfamily.</text>
</comment>
<geneLocation type="chloroplast"/>
<keyword id="KW-0148">Chlorophyll</keyword>
<keyword id="KW-0150">Chloroplast</keyword>
<keyword id="KW-0157">Chromophore</keyword>
<keyword id="KW-0472">Membrane</keyword>
<keyword id="KW-0602">Photosynthesis</keyword>
<keyword id="KW-0604">Photosystem II</keyword>
<keyword id="KW-0934">Plastid</keyword>
<keyword id="KW-0793">Thylakoid</keyword>
<keyword id="KW-0812">Transmembrane</keyword>
<keyword id="KW-1133">Transmembrane helix</keyword>
<evidence type="ECO:0000255" key="1">
    <source>
        <dbReference type="HAMAP-Rule" id="MF_01495"/>
    </source>
</evidence>
<reference key="1">
    <citation type="journal article" date="2007" name="Mol. Phylogenet. Evol.">
        <title>Phylogenetic and evolutionary implications of complete chloroplast genome sequences of four early-diverging angiosperms: Buxus (Buxaceae), Chloranthus (Chloranthaceae), Dioscorea (Dioscoreaceae), and Illicium (Schisandraceae).</title>
        <authorList>
            <person name="Hansen D.R."/>
            <person name="Dastidar S.G."/>
            <person name="Cai Z."/>
            <person name="Penaflor C."/>
            <person name="Kuehl J.V."/>
            <person name="Boore J.L."/>
            <person name="Jansen R.K."/>
        </authorList>
    </citation>
    <scope>NUCLEOTIDE SEQUENCE [LARGE SCALE GENOMIC DNA]</scope>
</reference>
<sequence>MGLPWYRVHTVVLNDPGRLLSVHIMHTALVSGWAGSMALYELAVFDPSDPVLDPMWRQGMFVIPFMTRLGINNSWGGWSITGGTITNPGIWSYEGVAGAHIVFSGLCFLAAIWHWVYWDLEIFCDERTGKPSLDLPKIFGIHLFLSGVACFGFGAFHVTGLYGPGIWVSDPYGLTGKVQSVNPAWGAEGFDPFVPGGIASHHIAAGTLGILAGLFHLSVRPPQRLYKGLRMGNIETVLSSSIAAVFFAAFVVAGTMWYGSATTPIELFGPTRYQWDQGYFQQEIYRRVGTGLSENQSLSEAWSKIPEKLAFYDYIGNNPAKGGLFRAGPMDNGDGIAVGWLGHPIFRDKEGHELFVRRMPTFFETFPVVLVDGDGIVRADVPFRRAESKYSVEQVGVTVEFYGGELNGVSYSDPATVKKYARRAQLGEIFELDRATLKSDGVFRSSPRGWFTFGHATFALLFFFGHIWHGARTLFRDVFAGIDPDLDAQVEFGTFQKLGDPTTRRQVV</sequence>
<organism>
    <name type="scientific">Chloranthus spicatus</name>
    <name type="common">Chulantree</name>
    <name type="synonym">Nigrina spicata</name>
    <dbReference type="NCBI Taxonomy" id="13006"/>
    <lineage>
        <taxon>Eukaryota</taxon>
        <taxon>Viridiplantae</taxon>
        <taxon>Streptophyta</taxon>
        <taxon>Embryophyta</taxon>
        <taxon>Tracheophyta</taxon>
        <taxon>Spermatophyta</taxon>
        <taxon>Magnoliopsida</taxon>
        <taxon>Chloranthales</taxon>
        <taxon>Chloranthaceae</taxon>
        <taxon>Chloranthus</taxon>
    </lineage>
</organism>
<proteinExistence type="inferred from homology"/>
<dbReference type="EMBL" id="EF380352">
    <property type="protein sequence ID" value="ABQ43285.1"/>
    <property type="molecule type" value="Genomic_DNA"/>
</dbReference>
<dbReference type="RefSeq" id="YP_001294124.1">
    <property type="nucleotide sequence ID" value="NC_009598.1"/>
</dbReference>
<dbReference type="SMR" id="A6MME8"/>
<dbReference type="GeneID" id="5236474"/>
<dbReference type="GO" id="GO:0009535">
    <property type="term" value="C:chloroplast thylakoid membrane"/>
    <property type="evidence" value="ECO:0007669"/>
    <property type="project" value="UniProtKB-SubCell"/>
</dbReference>
<dbReference type="GO" id="GO:0009523">
    <property type="term" value="C:photosystem II"/>
    <property type="evidence" value="ECO:0007669"/>
    <property type="project" value="UniProtKB-KW"/>
</dbReference>
<dbReference type="GO" id="GO:0016168">
    <property type="term" value="F:chlorophyll binding"/>
    <property type="evidence" value="ECO:0007669"/>
    <property type="project" value="UniProtKB-UniRule"/>
</dbReference>
<dbReference type="GO" id="GO:0045156">
    <property type="term" value="F:electron transporter, transferring electrons within the cyclic electron transport pathway of photosynthesis activity"/>
    <property type="evidence" value="ECO:0007669"/>
    <property type="project" value="InterPro"/>
</dbReference>
<dbReference type="GO" id="GO:0009772">
    <property type="term" value="P:photosynthetic electron transport in photosystem II"/>
    <property type="evidence" value="ECO:0007669"/>
    <property type="project" value="InterPro"/>
</dbReference>
<dbReference type="FunFam" id="3.10.680.10:FF:000001">
    <property type="entry name" value="Photosystem II CP47 reaction center protein"/>
    <property type="match status" value="1"/>
</dbReference>
<dbReference type="Gene3D" id="3.10.680.10">
    <property type="entry name" value="Photosystem II CP47 reaction center protein"/>
    <property type="match status" value="1"/>
</dbReference>
<dbReference type="HAMAP" id="MF_01495">
    <property type="entry name" value="PSII_PsbB_CP47"/>
    <property type="match status" value="1"/>
</dbReference>
<dbReference type="InterPro" id="IPR000932">
    <property type="entry name" value="PS_antenna-like"/>
</dbReference>
<dbReference type="InterPro" id="IPR036001">
    <property type="entry name" value="PS_II_antenna-like_sf"/>
</dbReference>
<dbReference type="InterPro" id="IPR017486">
    <property type="entry name" value="PSII_PsbB"/>
</dbReference>
<dbReference type="NCBIfam" id="TIGR03039">
    <property type="entry name" value="PS_II_CP47"/>
    <property type="match status" value="1"/>
</dbReference>
<dbReference type="PANTHER" id="PTHR33180">
    <property type="entry name" value="PHOTOSYSTEM II CP43 REACTION CENTER PROTEIN"/>
    <property type="match status" value="1"/>
</dbReference>
<dbReference type="PANTHER" id="PTHR33180:SF37">
    <property type="entry name" value="PHOTOSYSTEM II CP43 REACTION CENTER PROTEIN"/>
    <property type="match status" value="1"/>
</dbReference>
<dbReference type="Pfam" id="PF00421">
    <property type="entry name" value="PSII"/>
    <property type="match status" value="1"/>
</dbReference>
<dbReference type="SUPFAM" id="SSF161077">
    <property type="entry name" value="Photosystem II antenna protein-like"/>
    <property type="match status" value="1"/>
</dbReference>